<protein>
    <recommendedName>
        <fullName>Actin</fullName>
        <ecNumber evidence="1">3.6.4.-</ecNumber>
    </recommendedName>
</protein>
<evidence type="ECO:0000250" key="1">
    <source>
        <dbReference type="UniProtKB" id="P60010"/>
    </source>
</evidence>
<evidence type="ECO:0000305" key="2"/>
<keyword id="KW-0067">ATP-binding</keyword>
<keyword id="KW-0963">Cytoplasm</keyword>
<keyword id="KW-0206">Cytoskeleton</keyword>
<keyword id="KW-0378">Hydrolase</keyword>
<keyword id="KW-0547">Nucleotide-binding</keyword>
<name>ACT_HYPJE</name>
<organism>
    <name type="scientific">Hypocrea jecorina</name>
    <name type="common">Trichoderma reesei</name>
    <dbReference type="NCBI Taxonomy" id="51453"/>
    <lineage>
        <taxon>Eukaryota</taxon>
        <taxon>Fungi</taxon>
        <taxon>Dikarya</taxon>
        <taxon>Ascomycota</taxon>
        <taxon>Pezizomycotina</taxon>
        <taxon>Sordariomycetes</taxon>
        <taxon>Hypocreomycetidae</taxon>
        <taxon>Hypocreales</taxon>
        <taxon>Hypocreaceae</taxon>
        <taxon>Trichoderma</taxon>
    </lineage>
</organism>
<dbReference type="EC" id="3.6.4.-" evidence="1"/>
<dbReference type="EMBL" id="X75421">
    <property type="protein sequence ID" value="CAA53173.1"/>
    <property type="molecule type" value="Genomic_DNA"/>
</dbReference>
<dbReference type="SMR" id="Q99023"/>
<dbReference type="GO" id="GO:0005737">
    <property type="term" value="C:cytoplasm"/>
    <property type="evidence" value="ECO:0007669"/>
    <property type="project" value="UniProtKB-KW"/>
</dbReference>
<dbReference type="GO" id="GO:0005856">
    <property type="term" value="C:cytoskeleton"/>
    <property type="evidence" value="ECO:0007669"/>
    <property type="project" value="UniProtKB-SubCell"/>
</dbReference>
<dbReference type="GO" id="GO:0005524">
    <property type="term" value="F:ATP binding"/>
    <property type="evidence" value="ECO:0007669"/>
    <property type="project" value="UniProtKB-KW"/>
</dbReference>
<dbReference type="GO" id="GO:0016787">
    <property type="term" value="F:hydrolase activity"/>
    <property type="evidence" value="ECO:0007669"/>
    <property type="project" value="UniProtKB-KW"/>
</dbReference>
<dbReference type="CDD" id="cd10224">
    <property type="entry name" value="ASKHA_NBD_actin"/>
    <property type="match status" value="1"/>
</dbReference>
<dbReference type="FunFam" id="2.30.36.70:FF:000001">
    <property type="entry name" value="Actin, alpha skeletal muscle"/>
    <property type="match status" value="1"/>
</dbReference>
<dbReference type="FunFam" id="3.30.420.40:FF:000291">
    <property type="entry name" value="Actin, alpha skeletal muscle"/>
    <property type="match status" value="1"/>
</dbReference>
<dbReference type="FunFam" id="3.90.640.10:FF:000001">
    <property type="entry name" value="Actin, muscle"/>
    <property type="match status" value="1"/>
</dbReference>
<dbReference type="FunFam" id="3.30.420.40:FF:000404">
    <property type="entry name" value="Major actin"/>
    <property type="match status" value="1"/>
</dbReference>
<dbReference type="FunFam" id="3.30.420.40:FF:000058">
    <property type="entry name" value="Putative actin-related protein 5"/>
    <property type="match status" value="1"/>
</dbReference>
<dbReference type="Gene3D" id="3.30.420.40">
    <property type="match status" value="2"/>
</dbReference>
<dbReference type="Gene3D" id="3.90.640.10">
    <property type="entry name" value="Actin, Chain A, domain 4"/>
    <property type="match status" value="1"/>
</dbReference>
<dbReference type="InterPro" id="IPR004000">
    <property type="entry name" value="Actin"/>
</dbReference>
<dbReference type="InterPro" id="IPR020902">
    <property type="entry name" value="Actin/actin-like_CS"/>
</dbReference>
<dbReference type="InterPro" id="IPR004001">
    <property type="entry name" value="Actin_CS"/>
</dbReference>
<dbReference type="InterPro" id="IPR043129">
    <property type="entry name" value="ATPase_NBD"/>
</dbReference>
<dbReference type="PANTHER" id="PTHR11937">
    <property type="entry name" value="ACTIN"/>
    <property type="match status" value="1"/>
</dbReference>
<dbReference type="Pfam" id="PF00022">
    <property type="entry name" value="Actin"/>
    <property type="match status" value="1"/>
</dbReference>
<dbReference type="PRINTS" id="PR00190">
    <property type="entry name" value="ACTIN"/>
</dbReference>
<dbReference type="SMART" id="SM00268">
    <property type="entry name" value="ACTIN"/>
    <property type="match status" value="1"/>
</dbReference>
<dbReference type="SUPFAM" id="SSF53067">
    <property type="entry name" value="Actin-like ATPase domain"/>
    <property type="match status" value="2"/>
</dbReference>
<dbReference type="PROSITE" id="PS00406">
    <property type="entry name" value="ACTINS_1"/>
    <property type="match status" value="1"/>
</dbReference>
<dbReference type="PROSITE" id="PS00432">
    <property type="entry name" value="ACTINS_2"/>
    <property type="match status" value="1"/>
</dbReference>
<dbReference type="PROSITE" id="PS01132">
    <property type="entry name" value="ACTINS_ACT_LIKE"/>
    <property type="match status" value="1"/>
</dbReference>
<sequence>MEEEVAALVIDNGSGMCKAGFAGDDAPRAVFPSIDGRSRHHGIMIGMGQKDSYVGDEAQSKRGILTLRYPIEHGVVTNWDDMEKIWHHTFYNELRVAPEEHPVLLTEAPINPKSNREKMTQIMFETFNAPAFYVSIQAVLSLYASGRTTGIVLDSGDGVTTVVPIYEGFALPHAIRRVDMAGRDLTDYLMKILAERGYTFSTTAEREIVRDIKEKLCYVAHDFEQEIQTAAQSSSLEKSYELPDAQVITIGDRFRAPQALFHASVLGLESAGIDVTTFNSIMKCDVDVRKELYGNIVMSGGTTMFPQGISDRMQKEITASAPSSAMKVKIIAPPERKYSVWIGGSILASLTTFQQMWISKQEYDESGPSIVHHKCF</sequence>
<feature type="chain" id="PRO_0000089045" description="Actin">
    <location>
        <begin position="1"/>
        <end position="376"/>
    </location>
</feature>
<gene>
    <name type="primary">act</name>
</gene>
<accession>Q99023</accession>
<reference key="1">
    <citation type="journal article" date="1995" name="Gene">
        <title>Structure, organization and promoter expression of the actin-encoding gene in Trichoderma reesei.</title>
        <authorList>
            <person name="Matheucci E. Jr."/>
            <person name="Henrique-Silva F."/>
            <person name="El-Gogary S."/>
            <person name="Rossini C.H."/>
            <person name="Leite A."/>
            <person name="Vera J.E."/>
            <person name="Urioste J.C.C."/>
            <person name="Crivellaro O."/>
            <person name="El-Dorry H."/>
        </authorList>
    </citation>
    <scope>NUCLEOTIDE SEQUENCE [GENOMIC DNA]</scope>
    <source>
        <strain>ATCC 56765 / Rut C-30</strain>
    </source>
</reference>
<comment type="function">
    <text>Actins are highly conserved proteins that are involved in various types of cell motility and are ubiquitously expressed in all eukaryotic cells.</text>
</comment>
<comment type="catalytic activity">
    <reaction evidence="1">
        <text>ATP + H2O = ADP + phosphate + H(+)</text>
        <dbReference type="Rhea" id="RHEA:13065"/>
        <dbReference type="ChEBI" id="CHEBI:15377"/>
        <dbReference type="ChEBI" id="CHEBI:15378"/>
        <dbReference type="ChEBI" id="CHEBI:30616"/>
        <dbReference type="ChEBI" id="CHEBI:43474"/>
        <dbReference type="ChEBI" id="CHEBI:456216"/>
    </reaction>
</comment>
<comment type="subcellular location">
    <subcellularLocation>
        <location>Cytoplasm</location>
        <location>Cytoskeleton</location>
    </subcellularLocation>
</comment>
<comment type="similarity">
    <text evidence="2">Belongs to the actin family.</text>
</comment>
<proteinExistence type="inferred from homology"/>